<organism>
    <name type="scientific">Thermoplasma acidophilum (strain ATCC 25905 / DSM 1728 / JCM 9062 / NBRC 15155 / AMRC-C165)</name>
    <dbReference type="NCBI Taxonomy" id="273075"/>
    <lineage>
        <taxon>Archaea</taxon>
        <taxon>Methanobacteriati</taxon>
        <taxon>Thermoplasmatota</taxon>
        <taxon>Thermoplasmata</taxon>
        <taxon>Thermoplasmatales</taxon>
        <taxon>Thermoplasmataceae</taxon>
        <taxon>Thermoplasma</taxon>
    </lineage>
</organism>
<accession>Q9HIR1</accession>
<gene>
    <name evidence="1" type="primary">rpl23</name>
    <name type="ordered locus">Ta1269</name>
</gene>
<dbReference type="EMBL" id="AL445067">
    <property type="protein sequence ID" value="CAC12393.1"/>
    <property type="molecule type" value="Genomic_DNA"/>
</dbReference>
<dbReference type="RefSeq" id="WP_010901677.1">
    <property type="nucleotide sequence ID" value="NC_002578.1"/>
</dbReference>
<dbReference type="SMR" id="Q9HIR1"/>
<dbReference type="FunCoup" id="Q9HIR1">
    <property type="interactions" value="144"/>
</dbReference>
<dbReference type="STRING" id="273075.gene:9572492"/>
<dbReference type="PaxDb" id="273075-Ta1269"/>
<dbReference type="EnsemblBacteria" id="CAC12393">
    <property type="protein sequence ID" value="CAC12393"/>
    <property type="gene ID" value="CAC12393"/>
</dbReference>
<dbReference type="KEGG" id="tac:Ta1269"/>
<dbReference type="eggNOG" id="arCOG04072">
    <property type="taxonomic scope" value="Archaea"/>
</dbReference>
<dbReference type="HOGENOM" id="CLU_037562_4_2_2"/>
<dbReference type="InParanoid" id="Q9HIR1"/>
<dbReference type="OrthoDB" id="7751at2157"/>
<dbReference type="Proteomes" id="UP000001024">
    <property type="component" value="Chromosome"/>
</dbReference>
<dbReference type="GO" id="GO:1990904">
    <property type="term" value="C:ribonucleoprotein complex"/>
    <property type="evidence" value="ECO:0007669"/>
    <property type="project" value="UniProtKB-KW"/>
</dbReference>
<dbReference type="GO" id="GO:0005840">
    <property type="term" value="C:ribosome"/>
    <property type="evidence" value="ECO:0007669"/>
    <property type="project" value="UniProtKB-KW"/>
</dbReference>
<dbReference type="GO" id="GO:0019843">
    <property type="term" value="F:rRNA binding"/>
    <property type="evidence" value="ECO:0007669"/>
    <property type="project" value="UniProtKB-UniRule"/>
</dbReference>
<dbReference type="GO" id="GO:0003735">
    <property type="term" value="F:structural constituent of ribosome"/>
    <property type="evidence" value="ECO:0007669"/>
    <property type="project" value="InterPro"/>
</dbReference>
<dbReference type="GO" id="GO:0006412">
    <property type="term" value="P:translation"/>
    <property type="evidence" value="ECO:0007669"/>
    <property type="project" value="UniProtKB-UniRule"/>
</dbReference>
<dbReference type="Gene3D" id="3.30.70.330">
    <property type="match status" value="1"/>
</dbReference>
<dbReference type="HAMAP" id="MF_01369_A">
    <property type="entry name" value="Ribosomal_uL23_A"/>
    <property type="match status" value="1"/>
</dbReference>
<dbReference type="InterPro" id="IPR012677">
    <property type="entry name" value="Nucleotide-bd_a/b_plait_sf"/>
</dbReference>
<dbReference type="InterPro" id="IPR019985">
    <property type="entry name" value="Ribosomal_uL23"/>
</dbReference>
<dbReference type="InterPro" id="IPR013025">
    <property type="entry name" value="Ribosomal_uL23-like"/>
</dbReference>
<dbReference type="InterPro" id="IPR012678">
    <property type="entry name" value="Ribosomal_uL23/eL15/eS24_sf"/>
</dbReference>
<dbReference type="InterPro" id="IPR001014">
    <property type="entry name" value="Ribosomal_uL23_CS"/>
</dbReference>
<dbReference type="NCBIfam" id="NF011118">
    <property type="entry name" value="PRK14548.1"/>
    <property type="match status" value="1"/>
</dbReference>
<dbReference type="NCBIfam" id="TIGR03636">
    <property type="entry name" value="uL23_arch"/>
    <property type="match status" value="1"/>
</dbReference>
<dbReference type="PANTHER" id="PTHR11620">
    <property type="entry name" value="60S RIBOSOMAL PROTEIN L23A"/>
    <property type="match status" value="1"/>
</dbReference>
<dbReference type="Pfam" id="PF00276">
    <property type="entry name" value="Ribosomal_L23"/>
    <property type="match status" value="1"/>
</dbReference>
<dbReference type="SUPFAM" id="SSF54189">
    <property type="entry name" value="Ribosomal proteins S24e, L23 and L15e"/>
    <property type="match status" value="1"/>
</dbReference>
<dbReference type="PROSITE" id="PS00050">
    <property type="entry name" value="RIBOSOMAL_L23"/>
    <property type="match status" value="1"/>
</dbReference>
<comment type="function">
    <text evidence="1">Binds to 23S rRNA. One of the proteins that surrounds the polypeptide exit tunnel on the outside of the ribosome.</text>
</comment>
<comment type="subunit">
    <text evidence="1">Part of the 50S ribosomal subunit. Contacts protein L29.</text>
</comment>
<comment type="similarity">
    <text evidence="1">Belongs to the universal ribosomal protein uL23 family.</text>
</comment>
<name>RL23_THEAC</name>
<reference key="1">
    <citation type="journal article" date="2000" name="Nature">
        <title>The genome sequence of the thermoacidophilic scavenger Thermoplasma acidophilum.</title>
        <authorList>
            <person name="Ruepp A."/>
            <person name="Graml W."/>
            <person name="Santos-Martinez M.-L."/>
            <person name="Koretke K.K."/>
            <person name="Volker C."/>
            <person name="Mewes H.-W."/>
            <person name="Frishman D."/>
            <person name="Stocker S."/>
            <person name="Lupas A.N."/>
            <person name="Baumeister W."/>
        </authorList>
    </citation>
    <scope>NUCLEOTIDE SEQUENCE [LARGE SCALE GENOMIC DNA]</scope>
    <source>
        <strain>ATCC 25905 / DSM 1728 / JCM 9062 / NBRC 15155 / AMRC-C165</strain>
    </source>
</reference>
<evidence type="ECO:0000255" key="1">
    <source>
        <dbReference type="HAMAP-Rule" id="MF_01369"/>
    </source>
</evidence>
<evidence type="ECO:0000305" key="2"/>
<keyword id="KW-1185">Reference proteome</keyword>
<keyword id="KW-0687">Ribonucleoprotein</keyword>
<keyword id="KW-0689">Ribosomal protein</keyword>
<keyword id="KW-0694">RNA-binding</keyword>
<keyword id="KW-0699">rRNA-binding</keyword>
<protein>
    <recommendedName>
        <fullName evidence="1">Large ribosomal subunit protein uL23</fullName>
    </recommendedName>
    <alternativeName>
        <fullName evidence="2">50S ribosomal protein L23</fullName>
    </alternativeName>
</protein>
<feature type="chain" id="PRO_0000272958" description="Large ribosomal subunit protein uL23">
    <location>
        <begin position="1"/>
        <end position="84"/>
    </location>
</feature>
<proteinExistence type="inferred from homology"/>
<sequence length="84" mass="9524">MKGDIIISPLSTEKTALMAEKENKLTLMVRRDANREMIKKEVEERFGVKVEGINVMITKKGKKAIVKLAKEYSAEEIAERIGVF</sequence>